<evidence type="ECO:0000250" key="1"/>
<evidence type="ECO:0000250" key="2">
    <source>
        <dbReference type="UniProtKB" id="Q7Z7M9"/>
    </source>
</evidence>
<evidence type="ECO:0000255" key="3"/>
<evidence type="ECO:0000255" key="4">
    <source>
        <dbReference type="PROSITE-ProRule" id="PRU00174"/>
    </source>
</evidence>
<evidence type="ECO:0000256" key="5">
    <source>
        <dbReference type="SAM" id="MobiDB-lite"/>
    </source>
</evidence>
<evidence type="ECO:0000269" key="6">
    <source>
    </source>
</evidence>
<evidence type="ECO:0000305" key="7"/>
<gene>
    <name type="primary">Galnt5</name>
</gene>
<feature type="chain" id="PRO_0000059111" description="Polypeptide N-acetylgalactosaminyltransferase 5">
    <location>
        <begin position="1"/>
        <end position="930"/>
    </location>
</feature>
<feature type="topological domain" description="Cytoplasmic" evidence="3">
    <location>
        <begin position="1"/>
        <end position="12"/>
    </location>
</feature>
<feature type="transmembrane region" description="Helical; Signal-anchor for type II membrane protein" evidence="3">
    <location>
        <begin position="13"/>
        <end position="35"/>
    </location>
</feature>
<feature type="topological domain" description="Lumenal" evidence="3">
    <location>
        <begin position="36"/>
        <end position="930"/>
    </location>
</feature>
<feature type="domain" description="Ricin B-type lectin" evidence="4">
    <location>
        <begin position="794"/>
        <end position="925"/>
    </location>
</feature>
<feature type="region of interest" description="Disordered" evidence="5">
    <location>
        <begin position="190"/>
        <end position="209"/>
    </location>
</feature>
<feature type="region of interest" description="Disordered" evidence="5">
    <location>
        <begin position="327"/>
        <end position="381"/>
    </location>
</feature>
<feature type="region of interest" description="Catalytic subdomain A">
    <location>
        <begin position="485"/>
        <end position="594"/>
    </location>
</feature>
<feature type="region of interest" description="Catalytic subdomain B">
    <location>
        <begin position="654"/>
        <end position="716"/>
    </location>
</feature>
<feature type="compositionally biased region" description="Polar residues" evidence="5">
    <location>
        <begin position="193"/>
        <end position="209"/>
    </location>
</feature>
<feature type="compositionally biased region" description="Polar residues" evidence="5">
    <location>
        <begin position="353"/>
        <end position="363"/>
    </location>
</feature>
<feature type="binding site" evidence="1">
    <location>
        <position position="526"/>
    </location>
    <ligand>
        <name>substrate</name>
    </ligand>
</feature>
<feature type="binding site" evidence="1">
    <location>
        <position position="555"/>
    </location>
    <ligand>
        <name>substrate</name>
    </ligand>
</feature>
<feature type="binding site" evidence="1">
    <location>
        <position position="578"/>
    </location>
    <ligand>
        <name>Mn(2+)</name>
        <dbReference type="ChEBI" id="CHEBI:29035"/>
    </ligand>
</feature>
<feature type="binding site" evidence="1">
    <location>
        <position position="579"/>
    </location>
    <ligand>
        <name>substrate</name>
    </ligand>
</feature>
<feature type="binding site" evidence="1">
    <location>
        <position position="580"/>
    </location>
    <ligand>
        <name>Mn(2+)</name>
        <dbReference type="ChEBI" id="CHEBI:29035"/>
    </ligand>
</feature>
<feature type="binding site" evidence="1">
    <location>
        <position position="685"/>
    </location>
    <ligand>
        <name>substrate</name>
    </ligand>
</feature>
<feature type="binding site" evidence="1">
    <location>
        <position position="713"/>
    </location>
    <ligand>
        <name>Mn(2+)</name>
        <dbReference type="ChEBI" id="CHEBI:29035"/>
    </ligand>
</feature>
<feature type="binding site" evidence="1">
    <location>
        <position position="716"/>
    </location>
    <ligand>
        <name>substrate</name>
    </ligand>
</feature>
<feature type="binding site" evidence="1">
    <location>
        <position position="721"/>
    </location>
    <ligand>
        <name>substrate</name>
    </ligand>
</feature>
<feature type="modified residue" description="Phosphoserine" evidence="2">
    <location>
        <position position="285"/>
    </location>
</feature>
<feature type="glycosylation site" description="N-linked (GlcNAc...) asparagine" evidence="3">
    <location>
        <position position="198"/>
    </location>
</feature>
<feature type="glycosylation site" description="N-linked (GlcNAc...) asparagine" evidence="3">
    <location>
        <position position="213"/>
    </location>
</feature>
<feature type="glycosylation site" description="N-linked (GlcNAc...) asparagine" evidence="3">
    <location>
        <position position="283"/>
    </location>
</feature>
<feature type="glycosylation site" description="N-linked (GlcNAc...) asparagine" evidence="3">
    <location>
        <position position="287"/>
    </location>
</feature>
<feature type="glycosylation site" description="N-linked (GlcNAc...) asparagine" evidence="3">
    <location>
        <position position="309"/>
    </location>
</feature>
<feature type="glycosylation site" description="N-linked (GlcNAc...) asparagine" evidence="3">
    <location>
        <position position="355"/>
    </location>
</feature>
<feature type="glycosylation site" description="N-linked (GlcNAc...) asparagine" evidence="3">
    <location>
        <position position="387"/>
    </location>
</feature>
<feature type="glycosylation site" description="N-linked (GlcNAc...) asparagine" evidence="3">
    <location>
        <position position="568"/>
    </location>
</feature>
<feature type="glycosylation site" description="N-linked (GlcNAc...) asparagine" evidence="3">
    <location>
        <position position="766"/>
    </location>
</feature>
<feature type="glycosylation site" description="N-linked (GlcNAc...) asparagine" evidence="3">
    <location>
        <position position="817"/>
    </location>
</feature>
<feature type="glycosylation site" description="N-linked (GlcNAc...) asparagine" evidence="3">
    <location>
        <position position="835"/>
    </location>
</feature>
<feature type="glycosylation site" description="N-linked (GlcNAc...) asparagine" evidence="3">
    <location>
        <position position="902"/>
    </location>
</feature>
<feature type="disulfide bond" evidence="4">
    <location>
        <begin position="476"/>
        <end position="708"/>
    </location>
</feature>
<feature type="disulfide bond" evidence="4">
    <location>
        <begin position="699"/>
        <end position="779"/>
    </location>
</feature>
<feature type="disulfide bond" evidence="4">
    <location>
        <begin position="812"/>
        <end position="825"/>
    </location>
</feature>
<feature type="disulfide bond" evidence="4">
    <location>
        <begin position="848"/>
        <end position="863"/>
    </location>
</feature>
<feature type="disulfide bond" evidence="4">
    <location>
        <begin position="898"/>
        <end position="913"/>
    </location>
</feature>
<feature type="sequence conflict" description="In Ref. 1; BAC26396." evidence="7" ref="1">
    <original>I</original>
    <variation>L</variation>
    <location>
        <position position="705"/>
    </location>
</feature>
<proteinExistence type="evidence at transcript level"/>
<name>GALT5_MOUSE</name>
<sequence length="930" mass="105780">MNKIRKFFRGSGRVLAFIFAASVIWLLFDMAALRLSFSEINAGLLKEDIIRREHTGFRVEPDQVKVLYTSIRGMGLPRNGAWGKENFRKAENHELKVEENMDQVQRKGKMQNLLGRRKAVPLWHLAHLQTLPVTIPMQKTQGRDSKPEVSSQYMMSKWMTVLESEKTPFTASRGVPLTKIAGRTETFDKKQEAPQNYNVSSDTSKQASERTLNMTISVKTDRSKQKSQTVTKLRMHFASPPILKSEEVTVIKKAEAQSKDLKHEALKALPLLKFIADMGHLKNQSTNETQLGRLPEDDAAKVAPGKKLNFSESHVVIITKEEELKTDTKEVPNSKTQTVFPKLLGGSPHKQIPRNQSKTSSSPPALKKAVSQSKPTISGGLHTARSNLTAKAPTVGYQQSHANIPENPGMHHVFRIDVTLSPRDLNAPGQFGRPVVVPPEKKKEAEQRWKEGNFNVYLSDLIPVDRAIEDTRPAGCAEQLVHNDLPTTSIIMCFVDEVWSALLRSVHSVLNRSPPHLIKEILLVDDFSTKEYLKADLDKYMSQFPKVRILRLKERHGLIRARLAGAQNATGDVLTFLDSHVECNVGWLEPLLERVYLNRKKVACPVIEVINDKDMSYMTVDNFQRGVFTWPMNFGWKTIPPDVVAKNGIKETDIIRCPVMAGGLFSIDKSYFYELGTYDPGLDVWGGENMELSFKVWMCGGEIEIIPCSRVGHIFRNDNPYSFPKDRMKTVERNLVRVAEVWLDDYRELFYGHGDHLIDQGLDVGNLTQQRELRKKLKCKSFKWYLDNVFPDLKAPVVRASGVLINMALGKCVSIENITVTLEDCDGSSQLQQFNYTWVRLIKHGEWCVAPIPEKGSLTLYHCDNRNNRLKWLHKSASAFHPELVDHIVFENYQQLLCMEGNFSQKTLKLAACNPMELQQKWKFEKYYEV</sequence>
<dbReference type="EC" id="2.4.1.41"/>
<dbReference type="EMBL" id="AK029323">
    <property type="protein sequence ID" value="BAC26396.1"/>
    <property type="molecule type" value="mRNA"/>
</dbReference>
<dbReference type="EMBL" id="AL928564">
    <property type="status" value="NOT_ANNOTATED_CDS"/>
    <property type="molecule type" value="Genomic_DNA"/>
</dbReference>
<dbReference type="EMBL" id="AL929144">
    <property type="status" value="NOT_ANNOTATED_CDS"/>
    <property type="molecule type" value="Genomic_DNA"/>
</dbReference>
<dbReference type="EMBL" id="CH466519">
    <property type="protein sequence ID" value="EDL26932.1"/>
    <property type="molecule type" value="Genomic_DNA"/>
</dbReference>
<dbReference type="CCDS" id="CCDS38125.1"/>
<dbReference type="RefSeq" id="NP_766443.2">
    <property type="nucleotide sequence ID" value="NM_172855.3"/>
</dbReference>
<dbReference type="RefSeq" id="XP_006498111.1">
    <property type="nucleotide sequence ID" value="XM_006498048.5"/>
</dbReference>
<dbReference type="RefSeq" id="XP_006498112.1">
    <property type="nucleotide sequence ID" value="XM_006498049.3"/>
</dbReference>
<dbReference type="SMR" id="Q8C102"/>
<dbReference type="BioGRID" id="232310">
    <property type="interactions" value="1"/>
</dbReference>
<dbReference type="FunCoup" id="Q8C102">
    <property type="interactions" value="391"/>
</dbReference>
<dbReference type="STRING" id="10090.ENSMUSP00000108235"/>
<dbReference type="CAZy" id="CBM13">
    <property type="family name" value="Carbohydrate-Binding Module Family 13"/>
</dbReference>
<dbReference type="CAZy" id="GT27">
    <property type="family name" value="Glycosyltransferase Family 27"/>
</dbReference>
<dbReference type="GlyCosmos" id="Q8C102">
    <property type="glycosylation" value="12 sites, No reported glycans"/>
</dbReference>
<dbReference type="GlyGen" id="Q8C102">
    <property type="glycosylation" value="12 sites"/>
</dbReference>
<dbReference type="iPTMnet" id="Q8C102"/>
<dbReference type="PhosphoSitePlus" id="Q8C102"/>
<dbReference type="jPOST" id="Q8C102"/>
<dbReference type="PaxDb" id="10090-ENSMUSP00000108235"/>
<dbReference type="ProteomicsDB" id="268843"/>
<dbReference type="Antibodypedia" id="2453">
    <property type="antibodies" value="104 antibodies from 20 providers"/>
</dbReference>
<dbReference type="DNASU" id="241391"/>
<dbReference type="Ensembl" id="ENSMUST00000112616.8">
    <property type="protein sequence ID" value="ENSMUSP00000108235.2"/>
    <property type="gene ID" value="ENSMUSG00000026828.12"/>
</dbReference>
<dbReference type="Ensembl" id="ENSMUST00000166729.2">
    <property type="protein sequence ID" value="ENSMUSP00000131362.2"/>
    <property type="gene ID" value="ENSMUSG00000026828.12"/>
</dbReference>
<dbReference type="GeneID" id="241391"/>
<dbReference type="KEGG" id="mmu:241391"/>
<dbReference type="UCSC" id="uc012bvo.1">
    <property type="organism name" value="mouse"/>
</dbReference>
<dbReference type="AGR" id="MGI:2179403"/>
<dbReference type="CTD" id="11227"/>
<dbReference type="MGI" id="MGI:2179403">
    <property type="gene designation" value="Galnt5"/>
</dbReference>
<dbReference type="VEuPathDB" id="HostDB:ENSMUSG00000026828"/>
<dbReference type="eggNOG" id="KOG3736">
    <property type="taxonomic scope" value="Eukaryota"/>
</dbReference>
<dbReference type="GeneTree" id="ENSGT00940000159241"/>
<dbReference type="HOGENOM" id="CLU_013477_1_0_1"/>
<dbReference type="InParanoid" id="Q8C102"/>
<dbReference type="OMA" id="HGMHHVL"/>
<dbReference type="OrthoDB" id="9982049at2759"/>
<dbReference type="PhylomeDB" id="Q8C102"/>
<dbReference type="TreeFam" id="TF313267"/>
<dbReference type="Reactome" id="R-MMU-913709">
    <property type="pathway name" value="O-linked glycosylation of mucins"/>
</dbReference>
<dbReference type="UniPathway" id="UPA00378"/>
<dbReference type="BioGRID-ORCS" id="241391">
    <property type="hits" value="1 hit in 78 CRISPR screens"/>
</dbReference>
<dbReference type="PRO" id="PR:Q8C102"/>
<dbReference type="Proteomes" id="UP000000589">
    <property type="component" value="Chromosome 2"/>
</dbReference>
<dbReference type="RNAct" id="Q8C102">
    <property type="molecule type" value="protein"/>
</dbReference>
<dbReference type="Bgee" id="ENSMUSG00000026828">
    <property type="expression patterns" value="Expressed in lumbar dorsal root ganglion and 84 other cell types or tissues"/>
</dbReference>
<dbReference type="GO" id="GO:0000139">
    <property type="term" value="C:Golgi membrane"/>
    <property type="evidence" value="ECO:0007669"/>
    <property type="project" value="UniProtKB-SubCell"/>
</dbReference>
<dbReference type="GO" id="GO:0030246">
    <property type="term" value="F:carbohydrate binding"/>
    <property type="evidence" value="ECO:0007669"/>
    <property type="project" value="UniProtKB-KW"/>
</dbReference>
<dbReference type="GO" id="GO:0046872">
    <property type="term" value="F:metal ion binding"/>
    <property type="evidence" value="ECO:0007669"/>
    <property type="project" value="UniProtKB-KW"/>
</dbReference>
<dbReference type="GO" id="GO:0004653">
    <property type="term" value="F:polypeptide N-acetylgalactosaminyltransferase activity"/>
    <property type="evidence" value="ECO:0007669"/>
    <property type="project" value="UniProtKB-EC"/>
</dbReference>
<dbReference type="GO" id="GO:0006486">
    <property type="term" value="P:protein glycosylation"/>
    <property type="evidence" value="ECO:0007669"/>
    <property type="project" value="UniProtKB-UniPathway"/>
</dbReference>
<dbReference type="CDD" id="cd02510">
    <property type="entry name" value="pp-GalNAc-T"/>
    <property type="match status" value="1"/>
</dbReference>
<dbReference type="FunFam" id="2.80.10.50:FF:000046">
    <property type="entry name" value="Polypeptide N-acetylgalactosaminyltransferase"/>
    <property type="match status" value="1"/>
</dbReference>
<dbReference type="FunFam" id="3.90.550.10:FF:000088">
    <property type="entry name" value="Polypeptide N-acetylgalactosaminyltransferase"/>
    <property type="match status" value="1"/>
</dbReference>
<dbReference type="Gene3D" id="2.80.10.50">
    <property type="match status" value="1"/>
</dbReference>
<dbReference type="Gene3D" id="3.90.550.10">
    <property type="entry name" value="Spore Coat Polysaccharide Biosynthesis Protein SpsA, Chain A"/>
    <property type="match status" value="1"/>
</dbReference>
<dbReference type="InterPro" id="IPR045885">
    <property type="entry name" value="GalNAc-T"/>
</dbReference>
<dbReference type="InterPro" id="IPR001173">
    <property type="entry name" value="Glyco_trans_2-like"/>
</dbReference>
<dbReference type="InterPro" id="IPR029044">
    <property type="entry name" value="Nucleotide-diphossugar_trans"/>
</dbReference>
<dbReference type="InterPro" id="IPR035992">
    <property type="entry name" value="Ricin_B-like_lectins"/>
</dbReference>
<dbReference type="InterPro" id="IPR000772">
    <property type="entry name" value="Ricin_B_lectin"/>
</dbReference>
<dbReference type="PANTHER" id="PTHR11675">
    <property type="entry name" value="N-ACETYLGALACTOSAMINYLTRANSFERASE"/>
    <property type="match status" value="1"/>
</dbReference>
<dbReference type="PANTHER" id="PTHR11675:SF130">
    <property type="entry name" value="POLYPEPTIDE N-ACETYLGALACTOSAMINYLTRANSFERASE 5"/>
    <property type="match status" value="1"/>
</dbReference>
<dbReference type="Pfam" id="PF00535">
    <property type="entry name" value="Glycos_transf_2"/>
    <property type="match status" value="1"/>
</dbReference>
<dbReference type="Pfam" id="PF00652">
    <property type="entry name" value="Ricin_B_lectin"/>
    <property type="match status" value="1"/>
</dbReference>
<dbReference type="SMART" id="SM00458">
    <property type="entry name" value="RICIN"/>
    <property type="match status" value="1"/>
</dbReference>
<dbReference type="SUPFAM" id="SSF53448">
    <property type="entry name" value="Nucleotide-diphospho-sugar transferases"/>
    <property type="match status" value="1"/>
</dbReference>
<dbReference type="SUPFAM" id="SSF50370">
    <property type="entry name" value="Ricin B-like lectins"/>
    <property type="match status" value="1"/>
</dbReference>
<dbReference type="PROSITE" id="PS50231">
    <property type="entry name" value="RICIN_B_LECTIN"/>
    <property type="match status" value="1"/>
</dbReference>
<comment type="function">
    <text evidence="1">Catalyzes the initial reaction in O-linked oligosaccharide biosynthesis, the transfer of an N-acetyl-D-galactosamine residue to a serine or threonine residue on the protein receptor. Has activity toward EA2 peptide substrate, but has a weak activity toward Muc2 or Muc1b substrates (By similarity).</text>
</comment>
<comment type="catalytic activity">
    <reaction>
        <text>L-seryl-[protein] + UDP-N-acetyl-alpha-D-galactosamine = a 3-O-[N-acetyl-alpha-D-galactosaminyl]-L-seryl-[protein] + UDP + H(+)</text>
        <dbReference type="Rhea" id="RHEA:23956"/>
        <dbReference type="Rhea" id="RHEA-COMP:9863"/>
        <dbReference type="Rhea" id="RHEA-COMP:12788"/>
        <dbReference type="ChEBI" id="CHEBI:15378"/>
        <dbReference type="ChEBI" id="CHEBI:29999"/>
        <dbReference type="ChEBI" id="CHEBI:53604"/>
        <dbReference type="ChEBI" id="CHEBI:58223"/>
        <dbReference type="ChEBI" id="CHEBI:67138"/>
        <dbReference type="EC" id="2.4.1.41"/>
    </reaction>
</comment>
<comment type="catalytic activity">
    <reaction>
        <text>L-threonyl-[protein] + UDP-N-acetyl-alpha-D-galactosamine = a 3-O-[N-acetyl-alpha-D-galactosaminyl]-L-threonyl-[protein] + UDP + H(+)</text>
        <dbReference type="Rhea" id="RHEA:52424"/>
        <dbReference type="Rhea" id="RHEA-COMP:11060"/>
        <dbReference type="Rhea" id="RHEA-COMP:11689"/>
        <dbReference type="ChEBI" id="CHEBI:15378"/>
        <dbReference type="ChEBI" id="CHEBI:30013"/>
        <dbReference type="ChEBI" id="CHEBI:58223"/>
        <dbReference type="ChEBI" id="CHEBI:67138"/>
        <dbReference type="ChEBI" id="CHEBI:87075"/>
        <dbReference type="EC" id="2.4.1.41"/>
    </reaction>
</comment>
<comment type="cofactor">
    <cofactor evidence="1">
        <name>Mn(2+)</name>
        <dbReference type="ChEBI" id="CHEBI:29035"/>
    </cofactor>
</comment>
<comment type="pathway">
    <text>Protein modification; protein glycosylation.</text>
</comment>
<comment type="subunit">
    <text evidence="1">Interacts with EXT2. Does not interact with EXT1, EXTL1 or EXTL3 (By similarity).</text>
</comment>
<comment type="subcellular location">
    <subcellularLocation>
        <location evidence="1">Golgi apparatus membrane</location>
        <topology evidence="1">Single-pass type II membrane protein</topology>
    </subcellularLocation>
</comment>
<comment type="tissue specificity">
    <text evidence="6">Expressed at low level. Not expressed before E7.5 during embryogenesis. Expressed in dental mesenchyme and tongue. Accumulates in a subset of mesenchymal cells at the ventral-most portions of the 12.5 dpc maxilla and mandible underlying the dental lamina.</text>
</comment>
<comment type="domain">
    <text evidence="1">There are two conserved domains in the glycosyltransferase region: the N-terminal domain (domain A, also called GT1 motif), which is probably involved in manganese coordination and substrate binding and the C-terminal domain (domain B, also called Gal/GalNAc-T motif), which is probably involved in catalytic reaction and UDP-Gal binding.</text>
</comment>
<comment type="domain">
    <text evidence="1">The ricin B-type lectin domain binds to GalNAc and contributes to the glycopeptide specificity.</text>
</comment>
<comment type="similarity">
    <text evidence="7">Belongs to the glycosyltransferase 2 family. GalNAc-T subfamily.</text>
</comment>
<comment type="online information" name="Functional Glycomics Gateway - GTase">
    <link uri="http://www.functionalglycomics.org/glycomics/molecule/jsp/glycoEnzyme/viewGlycoEnzyme.jsp?gbpId=gt_mou_514"/>
    <text>Polypeptide N-acetylgalactosaminyltransferase 5</text>
</comment>
<organism>
    <name type="scientific">Mus musculus</name>
    <name type="common">Mouse</name>
    <dbReference type="NCBI Taxonomy" id="10090"/>
    <lineage>
        <taxon>Eukaryota</taxon>
        <taxon>Metazoa</taxon>
        <taxon>Chordata</taxon>
        <taxon>Craniata</taxon>
        <taxon>Vertebrata</taxon>
        <taxon>Euteleostomi</taxon>
        <taxon>Mammalia</taxon>
        <taxon>Eutheria</taxon>
        <taxon>Euarchontoglires</taxon>
        <taxon>Glires</taxon>
        <taxon>Rodentia</taxon>
        <taxon>Myomorpha</taxon>
        <taxon>Muroidea</taxon>
        <taxon>Muridae</taxon>
        <taxon>Murinae</taxon>
        <taxon>Mus</taxon>
        <taxon>Mus</taxon>
    </lineage>
</organism>
<reference key="1">
    <citation type="journal article" date="2005" name="Science">
        <title>The transcriptional landscape of the mammalian genome.</title>
        <authorList>
            <person name="Carninci P."/>
            <person name="Kasukawa T."/>
            <person name="Katayama S."/>
            <person name="Gough J."/>
            <person name="Frith M.C."/>
            <person name="Maeda N."/>
            <person name="Oyama R."/>
            <person name="Ravasi T."/>
            <person name="Lenhard B."/>
            <person name="Wells C."/>
            <person name="Kodzius R."/>
            <person name="Shimokawa K."/>
            <person name="Bajic V.B."/>
            <person name="Brenner S.E."/>
            <person name="Batalov S."/>
            <person name="Forrest A.R."/>
            <person name="Zavolan M."/>
            <person name="Davis M.J."/>
            <person name="Wilming L.G."/>
            <person name="Aidinis V."/>
            <person name="Allen J.E."/>
            <person name="Ambesi-Impiombato A."/>
            <person name="Apweiler R."/>
            <person name="Aturaliya R.N."/>
            <person name="Bailey T.L."/>
            <person name="Bansal M."/>
            <person name="Baxter L."/>
            <person name="Beisel K.W."/>
            <person name="Bersano T."/>
            <person name="Bono H."/>
            <person name="Chalk A.M."/>
            <person name="Chiu K.P."/>
            <person name="Choudhary V."/>
            <person name="Christoffels A."/>
            <person name="Clutterbuck D.R."/>
            <person name="Crowe M.L."/>
            <person name="Dalla E."/>
            <person name="Dalrymple B.P."/>
            <person name="de Bono B."/>
            <person name="Della Gatta G."/>
            <person name="di Bernardo D."/>
            <person name="Down T."/>
            <person name="Engstrom P."/>
            <person name="Fagiolini M."/>
            <person name="Faulkner G."/>
            <person name="Fletcher C.F."/>
            <person name="Fukushima T."/>
            <person name="Furuno M."/>
            <person name="Futaki S."/>
            <person name="Gariboldi M."/>
            <person name="Georgii-Hemming P."/>
            <person name="Gingeras T.R."/>
            <person name="Gojobori T."/>
            <person name="Green R.E."/>
            <person name="Gustincich S."/>
            <person name="Harbers M."/>
            <person name="Hayashi Y."/>
            <person name="Hensch T.K."/>
            <person name="Hirokawa N."/>
            <person name="Hill D."/>
            <person name="Huminiecki L."/>
            <person name="Iacono M."/>
            <person name="Ikeo K."/>
            <person name="Iwama A."/>
            <person name="Ishikawa T."/>
            <person name="Jakt M."/>
            <person name="Kanapin A."/>
            <person name="Katoh M."/>
            <person name="Kawasawa Y."/>
            <person name="Kelso J."/>
            <person name="Kitamura H."/>
            <person name="Kitano H."/>
            <person name="Kollias G."/>
            <person name="Krishnan S.P."/>
            <person name="Kruger A."/>
            <person name="Kummerfeld S.K."/>
            <person name="Kurochkin I.V."/>
            <person name="Lareau L.F."/>
            <person name="Lazarevic D."/>
            <person name="Lipovich L."/>
            <person name="Liu J."/>
            <person name="Liuni S."/>
            <person name="McWilliam S."/>
            <person name="Madan Babu M."/>
            <person name="Madera M."/>
            <person name="Marchionni L."/>
            <person name="Matsuda H."/>
            <person name="Matsuzawa S."/>
            <person name="Miki H."/>
            <person name="Mignone F."/>
            <person name="Miyake S."/>
            <person name="Morris K."/>
            <person name="Mottagui-Tabar S."/>
            <person name="Mulder N."/>
            <person name="Nakano N."/>
            <person name="Nakauchi H."/>
            <person name="Ng P."/>
            <person name="Nilsson R."/>
            <person name="Nishiguchi S."/>
            <person name="Nishikawa S."/>
            <person name="Nori F."/>
            <person name="Ohara O."/>
            <person name="Okazaki Y."/>
            <person name="Orlando V."/>
            <person name="Pang K.C."/>
            <person name="Pavan W.J."/>
            <person name="Pavesi G."/>
            <person name="Pesole G."/>
            <person name="Petrovsky N."/>
            <person name="Piazza S."/>
            <person name="Reed J."/>
            <person name="Reid J.F."/>
            <person name="Ring B.Z."/>
            <person name="Ringwald M."/>
            <person name="Rost B."/>
            <person name="Ruan Y."/>
            <person name="Salzberg S.L."/>
            <person name="Sandelin A."/>
            <person name="Schneider C."/>
            <person name="Schoenbach C."/>
            <person name="Sekiguchi K."/>
            <person name="Semple C.A."/>
            <person name="Seno S."/>
            <person name="Sessa L."/>
            <person name="Sheng Y."/>
            <person name="Shibata Y."/>
            <person name="Shimada H."/>
            <person name="Shimada K."/>
            <person name="Silva D."/>
            <person name="Sinclair B."/>
            <person name="Sperling S."/>
            <person name="Stupka E."/>
            <person name="Sugiura K."/>
            <person name="Sultana R."/>
            <person name="Takenaka Y."/>
            <person name="Taki K."/>
            <person name="Tammoja K."/>
            <person name="Tan S.L."/>
            <person name="Tang S."/>
            <person name="Taylor M.S."/>
            <person name="Tegner J."/>
            <person name="Teichmann S.A."/>
            <person name="Ueda H.R."/>
            <person name="van Nimwegen E."/>
            <person name="Verardo R."/>
            <person name="Wei C.L."/>
            <person name="Yagi K."/>
            <person name="Yamanishi H."/>
            <person name="Zabarovsky E."/>
            <person name="Zhu S."/>
            <person name="Zimmer A."/>
            <person name="Hide W."/>
            <person name="Bult C."/>
            <person name="Grimmond S.M."/>
            <person name="Teasdale R.D."/>
            <person name="Liu E.T."/>
            <person name="Brusic V."/>
            <person name="Quackenbush J."/>
            <person name="Wahlestedt C."/>
            <person name="Mattick J.S."/>
            <person name="Hume D.A."/>
            <person name="Kai C."/>
            <person name="Sasaki D."/>
            <person name="Tomaru Y."/>
            <person name="Fukuda S."/>
            <person name="Kanamori-Katayama M."/>
            <person name="Suzuki M."/>
            <person name="Aoki J."/>
            <person name="Arakawa T."/>
            <person name="Iida J."/>
            <person name="Imamura K."/>
            <person name="Itoh M."/>
            <person name="Kato T."/>
            <person name="Kawaji H."/>
            <person name="Kawagashira N."/>
            <person name="Kawashima T."/>
            <person name="Kojima M."/>
            <person name="Kondo S."/>
            <person name="Konno H."/>
            <person name="Nakano K."/>
            <person name="Ninomiya N."/>
            <person name="Nishio T."/>
            <person name="Okada M."/>
            <person name="Plessy C."/>
            <person name="Shibata K."/>
            <person name="Shiraki T."/>
            <person name="Suzuki S."/>
            <person name="Tagami M."/>
            <person name="Waki K."/>
            <person name="Watahiki A."/>
            <person name="Okamura-Oho Y."/>
            <person name="Suzuki H."/>
            <person name="Kawai J."/>
            <person name="Hayashizaki Y."/>
        </authorList>
    </citation>
    <scope>NUCLEOTIDE SEQUENCE [LARGE SCALE MRNA]</scope>
    <source>
        <strain>C57BL/6J</strain>
        <tissue>Head</tissue>
    </source>
</reference>
<reference key="2">
    <citation type="journal article" date="2009" name="PLoS Biol.">
        <title>Lineage-specific biology revealed by a finished genome assembly of the mouse.</title>
        <authorList>
            <person name="Church D.M."/>
            <person name="Goodstadt L."/>
            <person name="Hillier L.W."/>
            <person name="Zody M.C."/>
            <person name="Goldstein S."/>
            <person name="She X."/>
            <person name="Bult C.J."/>
            <person name="Agarwala R."/>
            <person name="Cherry J.L."/>
            <person name="DiCuccio M."/>
            <person name="Hlavina W."/>
            <person name="Kapustin Y."/>
            <person name="Meric P."/>
            <person name="Maglott D."/>
            <person name="Birtle Z."/>
            <person name="Marques A.C."/>
            <person name="Graves T."/>
            <person name="Zhou S."/>
            <person name="Teague B."/>
            <person name="Potamousis K."/>
            <person name="Churas C."/>
            <person name="Place M."/>
            <person name="Herschleb J."/>
            <person name="Runnheim R."/>
            <person name="Forrest D."/>
            <person name="Amos-Landgraf J."/>
            <person name="Schwartz D.C."/>
            <person name="Cheng Z."/>
            <person name="Lindblad-Toh K."/>
            <person name="Eichler E.E."/>
            <person name="Ponting C.P."/>
        </authorList>
    </citation>
    <scope>NUCLEOTIDE SEQUENCE [LARGE SCALE GENOMIC DNA]</scope>
    <source>
        <strain>C57BL/6J</strain>
    </source>
</reference>
<reference key="3">
    <citation type="submission" date="2005-07" db="EMBL/GenBank/DDBJ databases">
        <authorList>
            <person name="Mural R.J."/>
            <person name="Adams M.D."/>
            <person name="Myers E.W."/>
            <person name="Smith H.O."/>
            <person name="Venter J.C."/>
        </authorList>
    </citation>
    <scope>NUCLEOTIDE SEQUENCE [LARGE SCALE GENOMIC DNA]</scope>
</reference>
<reference key="4">
    <citation type="journal article" date="2000" name="Glycobiology">
        <title>Diverse spatial expression patterns of UDP-GalNAc:polypeptide N-acetylgalactosaminyl-transferase family member mRNAs during mouse development.</title>
        <authorList>
            <person name="Kingsley P.D."/>
            <person name="Hagen K.G."/>
            <person name="Maltby K.M."/>
            <person name="Zara J."/>
            <person name="Tabak L.A."/>
        </authorList>
    </citation>
    <scope>TISSUE SPECIFICITY</scope>
</reference>
<accession>Q8C102</accession>
<accession>A2AS75</accession>
<keyword id="KW-1015">Disulfide bond</keyword>
<keyword id="KW-0325">Glycoprotein</keyword>
<keyword id="KW-0328">Glycosyltransferase</keyword>
<keyword id="KW-0333">Golgi apparatus</keyword>
<keyword id="KW-0430">Lectin</keyword>
<keyword id="KW-0464">Manganese</keyword>
<keyword id="KW-0472">Membrane</keyword>
<keyword id="KW-0479">Metal-binding</keyword>
<keyword id="KW-0597">Phosphoprotein</keyword>
<keyword id="KW-1185">Reference proteome</keyword>
<keyword id="KW-0735">Signal-anchor</keyword>
<keyword id="KW-0808">Transferase</keyword>
<keyword id="KW-0812">Transmembrane</keyword>
<keyword id="KW-1133">Transmembrane helix</keyword>
<protein>
    <recommendedName>
        <fullName>Polypeptide N-acetylgalactosaminyltransferase 5</fullName>
        <ecNumber>2.4.1.41</ecNumber>
    </recommendedName>
    <alternativeName>
        <fullName>Polypeptide GalNAc transferase 5</fullName>
        <shortName>GalNAc-T5</shortName>
        <shortName>pp-GaNTase 5</shortName>
    </alternativeName>
    <alternativeName>
        <fullName>Protein-UDP acetylgalactosaminyltransferase 5</fullName>
    </alternativeName>
    <alternativeName>
        <fullName>UDP-GalNAc:polypeptide N-acetylgalactosaminyltransferase 5</fullName>
    </alternativeName>
</protein>